<protein>
    <recommendedName>
        <fullName evidence="2">Sodium-coupled neutral amino acid transporter 7</fullName>
    </recommendedName>
    <alternativeName>
        <fullName>Solute carrier family 38 member 7</fullName>
    </alternativeName>
</protein>
<keyword id="KW-0029">Amino-acid transport</keyword>
<keyword id="KW-0966">Cell projection</keyword>
<keyword id="KW-0406">Ion transport</keyword>
<keyword id="KW-0458">Lysosome</keyword>
<keyword id="KW-0472">Membrane</keyword>
<keyword id="KW-0597">Phosphoprotein</keyword>
<keyword id="KW-1185">Reference proteome</keyword>
<keyword id="KW-0915">Sodium</keyword>
<keyword id="KW-0739">Sodium transport</keyword>
<keyword id="KW-0812">Transmembrane</keyword>
<keyword id="KW-1133">Transmembrane helix</keyword>
<keyword id="KW-0813">Transport</keyword>
<feature type="chain" id="PRO_0000319596" description="Sodium-coupled neutral amino acid transporter 7">
    <location>
        <begin position="1"/>
        <end position="463"/>
    </location>
</feature>
<feature type="transmembrane region" description="Helical" evidence="3">
    <location>
        <begin position="56"/>
        <end position="76"/>
    </location>
</feature>
<feature type="transmembrane region" description="Helical" evidence="3">
    <location>
        <begin position="82"/>
        <end position="102"/>
    </location>
</feature>
<feature type="transmembrane region" description="Helical" evidence="3">
    <location>
        <begin position="130"/>
        <end position="150"/>
    </location>
</feature>
<feature type="transmembrane region" description="Helical" evidence="3">
    <location>
        <begin position="179"/>
        <end position="199"/>
    </location>
</feature>
<feature type="transmembrane region" description="Helical" evidence="3">
    <location>
        <begin position="206"/>
        <end position="226"/>
    </location>
</feature>
<feature type="transmembrane region" description="Helical" evidence="3">
    <location>
        <begin position="240"/>
        <end position="260"/>
    </location>
</feature>
<feature type="transmembrane region" description="Helical" evidence="3">
    <location>
        <begin position="283"/>
        <end position="303"/>
    </location>
</feature>
<feature type="transmembrane region" description="Helical" evidence="3">
    <location>
        <begin position="320"/>
        <end position="340"/>
    </location>
</feature>
<feature type="transmembrane region" description="Helical" evidence="3">
    <location>
        <begin position="372"/>
        <end position="392"/>
    </location>
</feature>
<feature type="transmembrane region" description="Helical" evidence="3">
    <location>
        <begin position="396"/>
        <end position="416"/>
    </location>
</feature>
<feature type="transmembrane region" description="Helical" evidence="3">
    <location>
        <begin position="429"/>
        <end position="449"/>
    </location>
</feature>
<feature type="modified residue" description="Phosphoserine" evidence="2">
    <location>
        <position position="28"/>
    </location>
</feature>
<evidence type="ECO:0000250" key="1">
    <source>
        <dbReference type="UniProtKB" id="Q8BWH0"/>
    </source>
</evidence>
<evidence type="ECO:0000250" key="2">
    <source>
        <dbReference type="UniProtKB" id="Q9NVC3"/>
    </source>
</evidence>
<evidence type="ECO:0000255" key="3"/>
<evidence type="ECO:0000305" key="4"/>
<sequence>MAQVSINRDLGEWGLSTDSGERARLLQSPSVDIAPKSEGEAPPGGVGGGTTSTLGAIFIVVNACLGAGLLNFPAAFSTAGGVAAGITLQMAMLVFIISGLVILAYCSQASNERTYQEVVWAVCGKLTGVLCEVAIATYTFGTCIAFLIIIGDQQDKIIAVMAKEPEGPGGSPWYTDRKFTISLTAFLFILPLSIPREIGFQKYASFLSVVGTWYVTAIIIIKYIWPDKEMTPADILNRPASWIAVFNAMPTICFGFQCHVSSVPVFNSMRQPEVKTWGGVVTAAMVIALAVYMGTGICGFLTFGDAVDPDVLLSYPSEDMAVAVARAFIILSVLTSYPILHFCGRAVIEGLWLRYQGMPVEEDVGRERRRRVLQTLVWFLLTLLLALFIPDIGKVISVIGGLAACFIFVFPGLCLIQAKLSEMEEVKPASWWAMVSYGVLLVTLGAFIFGQTTANAIFVDLLA</sequence>
<dbReference type="EMBL" id="BT030716">
    <property type="protein sequence ID" value="ABS45032.1"/>
    <property type="molecule type" value="mRNA"/>
</dbReference>
<dbReference type="RefSeq" id="NP_001093825.1">
    <property type="nucleotide sequence ID" value="NM_001100355.1"/>
</dbReference>
<dbReference type="RefSeq" id="XP_005218601.1">
    <property type="nucleotide sequence ID" value="XM_005218544.5"/>
</dbReference>
<dbReference type="RefSeq" id="XP_015331219.1">
    <property type="nucleotide sequence ID" value="XM_015475733.1"/>
</dbReference>
<dbReference type="RefSeq" id="XP_059732641.1">
    <property type="nucleotide sequence ID" value="XM_059876658.1"/>
</dbReference>
<dbReference type="SMR" id="A7E3U5"/>
<dbReference type="FunCoup" id="A7E3U5">
    <property type="interactions" value="664"/>
</dbReference>
<dbReference type="STRING" id="9913.ENSBTAP00000009438"/>
<dbReference type="PaxDb" id="9913-ENSBTAP00000009438"/>
<dbReference type="Ensembl" id="ENSBTAT00000009438.5">
    <property type="protein sequence ID" value="ENSBTAP00000009438.4"/>
    <property type="gene ID" value="ENSBTAG00000007170.6"/>
</dbReference>
<dbReference type="GeneID" id="513110"/>
<dbReference type="KEGG" id="bta:513110"/>
<dbReference type="CTD" id="55238"/>
<dbReference type="VEuPathDB" id="HostDB:ENSBTAG00000007170"/>
<dbReference type="VGNC" id="VGNC:34854">
    <property type="gene designation" value="SLC38A7"/>
</dbReference>
<dbReference type="eggNOG" id="KOG1305">
    <property type="taxonomic scope" value="Eukaryota"/>
</dbReference>
<dbReference type="GeneTree" id="ENSGT00940000158136"/>
<dbReference type="HOGENOM" id="CLU_038973_0_0_1"/>
<dbReference type="InParanoid" id="A7E3U5"/>
<dbReference type="OMA" id="FAFTGHQ"/>
<dbReference type="OrthoDB" id="438545at2759"/>
<dbReference type="TreeFam" id="TF328787"/>
<dbReference type="Proteomes" id="UP000009136">
    <property type="component" value="Chromosome 18"/>
</dbReference>
<dbReference type="Bgee" id="ENSBTAG00000007170">
    <property type="expression patterns" value="Expressed in monocyte and 104 other cell types or tissues"/>
</dbReference>
<dbReference type="GO" id="GO:0030424">
    <property type="term" value="C:axon"/>
    <property type="evidence" value="ECO:0000250"/>
    <property type="project" value="UniProtKB"/>
</dbReference>
<dbReference type="GO" id="GO:0005765">
    <property type="term" value="C:lysosomal membrane"/>
    <property type="evidence" value="ECO:0000250"/>
    <property type="project" value="UniProtKB"/>
</dbReference>
<dbReference type="GO" id="GO:0016020">
    <property type="term" value="C:membrane"/>
    <property type="evidence" value="ECO:0000318"/>
    <property type="project" value="GO_Central"/>
</dbReference>
<dbReference type="GO" id="GO:0043025">
    <property type="term" value="C:neuronal cell body"/>
    <property type="evidence" value="ECO:0000250"/>
    <property type="project" value="UniProtKB"/>
</dbReference>
<dbReference type="GO" id="GO:0015182">
    <property type="term" value="F:L-asparagine transmembrane transporter activity"/>
    <property type="evidence" value="ECO:0000318"/>
    <property type="project" value="GO_Central"/>
</dbReference>
<dbReference type="GO" id="GO:0140901">
    <property type="term" value="F:L-asparagine:sodium symporter activity"/>
    <property type="evidence" value="ECO:0000250"/>
    <property type="project" value="UniProtKB"/>
</dbReference>
<dbReference type="GO" id="GO:0015186">
    <property type="term" value="F:L-glutamine transmembrane transporter activity"/>
    <property type="evidence" value="ECO:0000318"/>
    <property type="project" value="GO_Central"/>
</dbReference>
<dbReference type="GO" id="GO:0140902">
    <property type="term" value="F:L-glutamine:sodium symporter activity"/>
    <property type="evidence" value="ECO:0000250"/>
    <property type="project" value="UniProtKB"/>
</dbReference>
<dbReference type="GO" id="GO:0003333">
    <property type="term" value="P:amino acid transmembrane transport"/>
    <property type="evidence" value="ECO:0000318"/>
    <property type="project" value="GO_Central"/>
</dbReference>
<dbReference type="GO" id="GO:0006867">
    <property type="term" value="P:asparagine transport"/>
    <property type="evidence" value="ECO:0000250"/>
    <property type="project" value="UniProtKB"/>
</dbReference>
<dbReference type="GO" id="GO:0006868">
    <property type="term" value="P:glutamine transport"/>
    <property type="evidence" value="ECO:0000250"/>
    <property type="project" value="UniProtKB"/>
</dbReference>
<dbReference type="GO" id="GO:0006814">
    <property type="term" value="P:sodium ion transport"/>
    <property type="evidence" value="ECO:0000250"/>
    <property type="project" value="UniProtKB"/>
</dbReference>
<dbReference type="FunFam" id="1.20.1740.10:FF:000038">
    <property type="entry name" value="Putative sodium-coupled neutral amino acid transporter 7"/>
    <property type="match status" value="1"/>
</dbReference>
<dbReference type="InterPro" id="IPR013057">
    <property type="entry name" value="AA_transpt_TM"/>
</dbReference>
<dbReference type="PANTHER" id="PTHR22950">
    <property type="entry name" value="AMINO ACID TRANSPORTER"/>
    <property type="match status" value="1"/>
</dbReference>
<dbReference type="PANTHER" id="PTHR22950:SF192">
    <property type="entry name" value="SODIUM-COUPLED NEUTRAL AMINO ACID TRANSPORTER 7"/>
    <property type="match status" value="1"/>
</dbReference>
<dbReference type="Pfam" id="PF01490">
    <property type="entry name" value="Aa_trans"/>
    <property type="match status" value="1"/>
</dbReference>
<accession>A7E3U5</accession>
<name>S38A7_BOVIN</name>
<reference key="1">
    <citation type="journal article" date="2005" name="BMC Genomics">
        <title>Characterization of 954 bovine full-CDS cDNA sequences.</title>
        <authorList>
            <person name="Harhay G.P."/>
            <person name="Sonstegard T.S."/>
            <person name="Keele J.W."/>
            <person name="Heaton M.P."/>
            <person name="Clawson M.L."/>
            <person name="Snelling W.M."/>
            <person name="Wiedmann R.T."/>
            <person name="Van Tassell C.P."/>
            <person name="Smith T.P.L."/>
        </authorList>
    </citation>
    <scope>NUCLEOTIDE SEQUENCE [LARGE SCALE MRNA]</scope>
</reference>
<proteinExistence type="evidence at transcript level"/>
<organism>
    <name type="scientific">Bos taurus</name>
    <name type="common">Bovine</name>
    <dbReference type="NCBI Taxonomy" id="9913"/>
    <lineage>
        <taxon>Eukaryota</taxon>
        <taxon>Metazoa</taxon>
        <taxon>Chordata</taxon>
        <taxon>Craniata</taxon>
        <taxon>Vertebrata</taxon>
        <taxon>Euteleostomi</taxon>
        <taxon>Mammalia</taxon>
        <taxon>Eutheria</taxon>
        <taxon>Laurasiatheria</taxon>
        <taxon>Artiodactyla</taxon>
        <taxon>Ruminantia</taxon>
        <taxon>Pecora</taxon>
        <taxon>Bovidae</taxon>
        <taxon>Bovinae</taxon>
        <taxon>Bos</taxon>
    </lineage>
</organism>
<comment type="function">
    <text evidence="2">Symporter that selectively cotransports sodium ions and amino acids, such as L-glutamine and L-asparagine from the lysosome into the cytoplasm and may participates in mTORC1 activation. The transport activity requires an acidic lysosomal lumen.</text>
</comment>
<comment type="catalytic activity">
    <reaction evidence="2">
        <text>L-asparagine(in) + Na(+)(in) = L-asparagine(out) + Na(+)(out)</text>
        <dbReference type="Rhea" id="RHEA:71383"/>
        <dbReference type="ChEBI" id="CHEBI:29101"/>
        <dbReference type="ChEBI" id="CHEBI:58048"/>
    </reaction>
</comment>
<comment type="catalytic activity">
    <reaction evidence="2">
        <text>L-glutamine(in) + Na(+)(in) = L-glutamine(out) + Na(+)(out)</text>
        <dbReference type="Rhea" id="RHEA:68236"/>
        <dbReference type="ChEBI" id="CHEBI:29101"/>
        <dbReference type="ChEBI" id="CHEBI:58359"/>
    </reaction>
</comment>
<comment type="subunit">
    <text evidence="2">Interacts with the mTORC1 complex; this interaction mediates the recruitment of mTORC1 to the lysosome and its subsequent activation.</text>
</comment>
<comment type="subcellular location">
    <subcellularLocation>
        <location evidence="2">Lysosome membrane</location>
        <topology evidence="3">Multi-pass membrane protein</topology>
    </subcellularLocation>
    <subcellularLocation>
        <location evidence="1">Cell projection</location>
        <location evidence="1">Axon</location>
    </subcellularLocation>
    <text evidence="1">In neurons, located in soma.</text>
</comment>
<comment type="similarity">
    <text evidence="4">Belongs to the amino acid/polyamine transporter 2 family.</text>
</comment>
<gene>
    <name evidence="2" type="primary">SLC38A7</name>
    <name type="synonym">SNAT7</name>
</gene>